<proteinExistence type="evidence at protein level"/>
<sequence length="1288" mass="144350">MPNLQQTASQSQHHLHPHHLRPQQQQQQHHHHHQQQQQQQHTHHQQQQQHHSDFPLPDGWDIAKDFDGKTYYIDHINKKTTWLDPRDCYTKPQTFEDCVGDELPMGWEESYDPNIGPYYINHLAQSTQLEDPRQEWKTVQEQMLSDYLSAAQDQLENKREMFDVKQQRLLWAQEEYNHLKLAASRSSLCSSSSSMSRHDPELLRADLMLARERVHQLKQELTHITNDISYTERGMNTLYSVGEKINARENGCYDIAEVHAIREEMLKVHKSLVSGEKVREELMRSLVQIKNELGRQQISEENSDLASPFDRVCVASQTDLCGSSGENLNGGARFAEMAKTKWQYAEWRKHIKKLQQQLADHVERIEPGQLESDKDRILLIQEKEKLLNDLNSISLKSRSEEEKRVIHQTRHKLEEDLKEAYEANNTCVANRLRFHEEKQLLLDKLQEALKSTKLLEERLKSFSSESTFSISSGSSLGSLSTASSKSALSFTDIYIDPFAVDSPIDVVDLRRRSQRLFQQHQQQRLHPVHPVLQQQQSAEVTLSPRSSLSMETPPASPMKYNAGADQTPQALKEEPTYANALPAPPAYTAPPPVPISGVRARPYDLDSTVLDCMMLEAKLQKLNMGTPLNLAVAPLSPISEKPSLLDLPQEMLSRSSSTSNTRSVSAAVSNESVAGDSGVFEASRAHLPRKELAQVQIGLKYLKQEGVLVVSLERANNLLALWTASADNSQVYLRAALLPNSLTSIRTKALGDFQKPVFNDTFAVPITLDKLLTKSLQVTVVTMTGQKEEIIGTVQISMAEFNPEDSTLKWYNVLSSKFIPSFESLDIPSTSAAAAAAAVAASNAPNPGNNREESSDESTITSSQTSTLTRNQAPCMELQEQMAAELLGLGPLNEPECSDDDDDDEEEELDDKQLVSDVGLMNSSSMLHAYLQNMKQEFADKETNTDRAYLPEKSRGQSQLMDDRPVKRSQTFTPSEAFSKNRYNCRLNRSDSDSAMHCGVAPHTFQRGAAERRSLRFHSKAPKSVTKLHHTHIPRTSLDLELDLQAQHSKLYFLNDQIAKLQNLKEVLQKACENKDPLVAAWAIENEEFQRLVARADPAKCPEERQLQKLLMKTAKEIHKLRKTKVPKGCPDLVSFKEKITFFTRKGLSVPELPSEFTLPEANPIEEEEEEEDENEFYNSAETAIAINTALVASSNRNKNLSEHPHRATSGAVPKIPAPVVTPAATPAATPAATPAATSAATPAATPVVSPAAQPDAKPADAPIPVASNDAEQQRFDYVVDRNYGVEV</sequence>
<dbReference type="EMBL" id="AE014297">
    <property type="protein sequence ID" value="AAF55090.2"/>
    <property type="molecule type" value="Genomic_DNA"/>
</dbReference>
<dbReference type="EMBL" id="BT021296">
    <property type="protein sequence ID" value="AAX33444.1"/>
    <property type="molecule type" value="mRNA"/>
</dbReference>
<dbReference type="RefSeq" id="NP_001034055.1">
    <property type="nucleotide sequence ID" value="NM_001038966.2"/>
</dbReference>
<dbReference type="RefSeq" id="NP_001287329.1">
    <property type="nucleotide sequence ID" value="NM_001300400.1"/>
</dbReference>
<dbReference type="BioGRID" id="66857">
    <property type="interactions" value="28"/>
</dbReference>
<dbReference type="ComplexPortal" id="CPX-2706">
    <property type="entry name" value="KIBRA-EX-MER complex"/>
</dbReference>
<dbReference type="FunCoup" id="Q9VFG8">
    <property type="interactions" value="301"/>
</dbReference>
<dbReference type="IntAct" id="Q9VFG8">
    <property type="interactions" value="8"/>
</dbReference>
<dbReference type="STRING" id="7227.FBpp0310756"/>
<dbReference type="GlyGen" id="Q9VFG8">
    <property type="glycosylation" value="4 sites"/>
</dbReference>
<dbReference type="iPTMnet" id="Q9VFG8"/>
<dbReference type="PaxDb" id="7227-FBpp0099467"/>
<dbReference type="EnsemblMetazoa" id="FBtr0100008">
    <property type="protein sequence ID" value="FBpp0099467"/>
    <property type="gene ID" value="FBgn0262127"/>
</dbReference>
<dbReference type="EnsemblMetazoa" id="FBtr0344383">
    <property type="protein sequence ID" value="FBpp0310756"/>
    <property type="gene ID" value="FBgn0262127"/>
</dbReference>
<dbReference type="GeneID" id="41783"/>
<dbReference type="KEGG" id="dme:Dmel_CG33967"/>
<dbReference type="UCSC" id="CG33967-RA">
    <property type="organism name" value="d. melanogaster"/>
</dbReference>
<dbReference type="AGR" id="FB:FBgn0262127"/>
<dbReference type="CTD" id="41783"/>
<dbReference type="FlyBase" id="FBgn0262127">
    <property type="gene designation" value="kibra"/>
</dbReference>
<dbReference type="VEuPathDB" id="VectorBase:FBgn0262127"/>
<dbReference type="eggNOG" id="KOG0940">
    <property type="taxonomic scope" value="Eukaryota"/>
</dbReference>
<dbReference type="eggNOG" id="KOG3209">
    <property type="taxonomic scope" value="Eukaryota"/>
</dbReference>
<dbReference type="GeneTree" id="ENSGT00410000025556"/>
<dbReference type="HOGENOM" id="CLU_005420_1_0_1"/>
<dbReference type="InParanoid" id="Q9VFG8"/>
<dbReference type="OMA" id="QVTVVSM"/>
<dbReference type="OrthoDB" id="2020426at2759"/>
<dbReference type="PhylomeDB" id="Q9VFG8"/>
<dbReference type="Reactome" id="R-DME-2028269">
    <property type="pathway name" value="Signaling by Hippo"/>
</dbReference>
<dbReference type="SignaLink" id="Q9VFG8"/>
<dbReference type="BioGRID-ORCS" id="41783">
    <property type="hits" value="0 hits in 3 CRISPR screens"/>
</dbReference>
<dbReference type="ChiTaRS" id="kibra">
    <property type="organism name" value="fly"/>
</dbReference>
<dbReference type="GenomeRNAi" id="41783"/>
<dbReference type="PRO" id="PR:Q9VFG8"/>
<dbReference type="Proteomes" id="UP000000803">
    <property type="component" value="Chromosome 3R"/>
</dbReference>
<dbReference type="Bgee" id="FBgn0262127">
    <property type="expression patterns" value="Expressed in cardial cell (Drosophila) in dorsal vessel heart and 205 other cell types or tissues"/>
</dbReference>
<dbReference type="ExpressionAtlas" id="Q9VFG8">
    <property type="expression patterns" value="baseline and differential"/>
</dbReference>
<dbReference type="GO" id="GO:0045179">
    <property type="term" value="C:apical cortex"/>
    <property type="evidence" value="ECO:0000314"/>
    <property type="project" value="FlyBase"/>
</dbReference>
<dbReference type="GO" id="GO:0106037">
    <property type="term" value="C:apicomedial cortex"/>
    <property type="evidence" value="ECO:0000314"/>
    <property type="project" value="FlyBase"/>
</dbReference>
<dbReference type="GO" id="GO:0005737">
    <property type="term" value="C:cytoplasm"/>
    <property type="evidence" value="ECO:0000314"/>
    <property type="project" value="UniProtKB"/>
</dbReference>
<dbReference type="GO" id="GO:0098592">
    <property type="term" value="C:cytoplasmic side of apical plasma membrane"/>
    <property type="evidence" value="ECO:0000314"/>
    <property type="project" value="FlyBase"/>
</dbReference>
<dbReference type="GO" id="GO:0036375">
    <property type="term" value="C:Kibra-Ex-Mer complex"/>
    <property type="evidence" value="ECO:0000314"/>
    <property type="project" value="UniProtKB"/>
</dbReference>
<dbReference type="GO" id="GO:0019900">
    <property type="term" value="F:kinase binding"/>
    <property type="evidence" value="ECO:0000318"/>
    <property type="project" value="GO_Central"/>
</dbReference>
<dbReference type="GO" id="GO:0060090">
    <property type="term" value="F:molecular adaptor activity"/>
    <property type="evidence" value="ECO:0000318"/>
    <property type="project" value="GO_Central"/>
</dbReference>
<dbReference type="GO" id="GO:0007298">
    <property type="term" value="P:border follicle cell migration"/>
    <property type="evidence" value="ECO:0000315"/>
    <property type="project" value="FlyBase"/>
</dbReference>
<dbReference type="GO" id="GO:0016477">
    <property type="term" value="P:cell migration"/>
    <property type="evidence" value="ECO:0000318"/>
    <property type="project" value="GO_Central"/>
</dbReference>
<dbReference type="GO" id="GO:0001745">
    <property type="term" value="P:compound eye morphogenesis"/>
    <property type="evidence" value="ECO:0000316"/>
    <property type="project" value="FlyBase"/>
</dbReference>
<dbReference type="GO" id="GO:0060253">
    <property type="term" value="P:negative regulation of glial cell proliferation"/>
    <property type="evidence" value="ECO:0000315"/>
    <property type="project" value="FlyBase"/>
</dbReference>
<dbReference type="GO" id="GO:0046621">
    <property type="term" value="P:negative regulation of organ growth"/>
    <property type="evidence" value="ECO:0000315"/>
    <property type="project" value="FlyBase"/>
</dbReference>
<dbReference type="GO" id="GO:0043065">
    <property type="term" value="P:positive regulation of apoptotic process"/>
    <property type="evidence" value="ECO:0000315"/>
    <property type="project" value="FlyBase"/>
</dbReference>
<dbReference type="GO" id="GO:0035332">
    <property type="term" value="P:positive regulation of hippo signaling"/>
    <property type="evidence" value="ECO:0000314"/>
    <property type="project" value="FlyBase"/>
</dbReference>
<dbReference type="GO" id="GO:0045463">
    <property type="term" value="P:R8 cell development"/>
    <property type="evidence" value="ECO:0000316"/>
    <property type="project" value="FlyBase"/>
</dbReference>
<dbReference type="GO" id="GO:0045464">
    <property type="term" value="P:R8 cell fate specification"/>
    <property type="evidence" value="ECO:0000315"/>
    <property type="project" value="FlyBase"/>
</dbReference>
<dbReference type="GO" id="GO:0006355">
    <property type="term" value="P:regulation of DNA-templated transcription"/>
    <property type="evidence" value="ECO:0000314"/>
    <property type="project" value="UniProtKB"/>
</dbReference>
<dbReference type="GO" id="GO:0035330">
    <property type="term" value="P:regulation of hippo signaling"/>
    <property type="evidence" value="ECO:0000318"/>
    <property type="project" value="GO_Central"/>
</dbReference>
<dbReference type="CDD" id="cd08680">
    <property type="entry name" value="C2_Kibra"/>
    <property type="match status" value="1"/>
</dbReference>
<dbReference type="CDD" id="cd00201">
    <property type="entry name" value="WW"/>
    <property type="match status" value="2"/>
</dbReference>
<dbReference type="FunFam" id="2.60.40.150:FF:000228">
    <property type="entry name" value="Blast:Protein kibra"/>
    <property type="match status" value="1"/>
</dbReference>
<dbReference type="Gene3D" id="2.20.70.10">
    <property type="match status" value="2"/>
</dbReference>
<dbReference type="Gene3D" id="2.60.40.150">
    <property type="entry name" value="C2 domain"/>
    <property type="match status" value="1"/>
</dbReference>
<dbReference type="InterPro" id="IPR000008">
    <property type="entry name" value="C2_dom"/>
</dbReference>
<dbReference type="InterPro" id="IPR035892">
    <property type="entry name" value="C2_domain_sf"/>
</dbReference>
<dbReference type="InterPro" id="IPR037771">
    <property type="entry name" value="C2_WWC"/>
</dbReference>
<dbReference type="InterPro" id="IPR001202">
    <property type="entry name" value="WW_dom"/>
</dbReference>
<dbReference type="InterPro" id="IPR036020">
    <property type="entry name" value="WW_dom_sf"/>
</dbReference>
<dbReference type="InterPro" id="IPR051105">
    <property type="entry name" value="WWC/KIBRA_Hippo_Reg"/>
</dbReference>
<dbReference type="PANTHER" id="PTHR14791">
    <property type="entry name" value="BOMB/KIRA PROTEINS"/>
    <property type="match status" value="1"/>
</dbReference>
<dbReference type="PANTHER" id="PTHR14791:SF29">
    <property type="entry name" value="PROTEIN KIBRA"/>
    <property type="match status" value="1"/>
</dbReference>
<dbReference type="Pfam" id="PF00168">
    <property type="entry name" value="C2"/>
    <property type="match status" value="1"/>
</dbReference>
<dbReference type="Pfam" id="PF00397">
    <property type="entry name" value="WW"/>
    <property type="match status" value="2"/>
</dbReference>
<dbReference type="SMART" id="SM00239">
    <property type="entry name" value="C2"/>
    <property type="match status" value="1"/>
</dbReference>
<dbReference type="SMART" id="SM00456">
    <property type="entry name" value="WW"/>
    <property type="match status" value="2"/>
</dbReference>
<dbReference type="SUPFAM" id="SSF49562">
    <property type="entry name" value="C2 domain (Calcium/lipid-binding domain, CaLB)"/>
    <property type="match status" value="1"/>
</dbReference>
<dbReference type="SUPFAM" id="SSF51045">
    <property type="entry name" value="WW domain"/>
    <property type="match status" value="2"/>
</dbReference>
<dbReference type="PROSITE" id="PS50004">
    <property type="entry name" value="C2"/>
    <property type="match status" value="1"/>
</dbReference>
<dbReference type="PROSITE" id="PS01159">
    <property type="entry name" value="WW_DOMAIN_1"/>
    <property type="match status" value="1"/>
</dbReference>
<dbReference type="PROSITE" id="PS50020">
    <property type="entry name" value="WW_DOMAIN_2"/>
    <property type="match status" value="2"/>
</dbReference>
<feature type="chain" id="PRO_0000392971" description="Protein kibra">
    <location>
        <begin position="1"/>
        <end position="1288"/>
    </location>
</feature>
<feature type="domain" description="WW 1" evidence="3">
    <location>
        <begin position="54"/>
        <end position="87"/>
    </location>
</feature>
<feature type="domain" description="WW 2" evidence="3">
    <location>
        <begin position="101"/>
        <end position="134"/>
    </location>
</feature>
<feature type="domain" description="C2" evidence="2">
    <location>
        <begin position="691"/>
        <end position="811"/>
    </location>
</feature>
<feature type="region of interest" description="Disordered" evidence="4">
    <location>
        <begin position="1"/>
        <end position="60"/>
    </location>
</feature>
<feature type="region of interest" description="Disordered" evidence="4">
    <location>
        <begin position="541"/>
        <end position="560"/>
    </location>
</feature>
<feature type="region of interest" description="Disordered" evidence="4">
    <location>
        <begin position="841"/>
        <end position="869"/>
    </location>
</feature>
<feature type="region of interest" description="Disordered" evidence="4">
    <location>
        <begin position="890"/>
        <end position="912"/>
    </location>
</feature>
<feature type="region of interest" description="Disordered" evidence="4">
    <location>
        <begin position="942"/>
        <end position="975"/>
    </location>
</feature>
<feature type="region of interest" description="Disordered" evidence="4">
    <location>
        <begin position="1224"/>
        <end position="1269"/>
    </location>
</feature>
<feature type="coiled-coil region" evidence="1">
    <location>
        <begin position="201"/>
        <end position="229"/>
    </location>
</feature>
<feature type="coiled-coil region" evidence="1">
    <location>
        <begin position="335"/>
        <end position="463"/>
    </location>
</feature>
<feature type="coiled-coil region" evidence="1">
    <location>
        <begin position="1049"/>
        <end position="1076"/>
    </location>
</feature>
<feature type="compositionally biased region" description="Polar residues" evidence="4">
    <location>
        <begin position="1"/>
        <end position="11"/>
    </location>
</feature>
<feature type="compositionally biased region" description="Low complexity" evidence="4">
    <location>
        <begin position="35"/>
        <end position="49"/>
    </location>
</feature>
<feature type="compositionally biased region" description="Polar residues" evidence="4">
    <location>
        <begin position="541"/>
        <end position="550"/>
    </location>
</feature>
<feature type="compositionally biased region" description="Low complexity" evidence="4">
    <location>
        <begin position="857"/>
        <end position="869"/>
    </location>
</feature>
<feature type="compositionally biased region" description="Acidic residues" evidence="4">
    <location>
        <begin position="896"/>
        <end position="910"/>
    </location>
</feature>
<feature type="compositionally biased region" description="Basic and acidic residues" evidence="4">
    <location>
        <begin position="942"/>
        <end position="966"/>
    </location>
</feature>
<feature type="compositionally biased region" description="Low complexity" evidence="4">
    <location>
        <begin position="1224"/>
        <end position="1267"/>
    </location>
</feature>
<feature type="modified residue" description="Phosphoserine" evidence="5">
    <location>
        <position position="992"/>
    </location>
</feature>
<feature type="sequence conflict" description="In Ref. 3; AAX33444." evidence="9" ref="3">
    <original>Y</original>
    <variation>C</variation>
    <location>
        <position position="230"/>
    </location>
</feature>
<feature type="sequence conflict" description="In Ref. 3; AAX33444." evidence="9" ref="3">
    <original>T</original>
    <variation>A</variation>
    <location>
        <position position="743"/>
    </location>
</feature>
<reference key="1">
    <citation type="journal article" date="2000" name="Science">
        <title>The genome sequence of Drosophila melanogaster.</title>
        <authorList>
            <person name="Adams M.D."/>
            <person name="Celniker S.E."/>
            <person name="Holt R.A."/>
            <person name="Evans C.A."/>
            <person name="Gocayne J.D."/>
            <person name="Amanatides P.G."/>
            <person name="Scherer S.E."/>
            <person name="Li P.W."/>
            <person name="Hoskins R.A."/>
            <person name="Galle R.F."/>
            <person name="George R.A."/>
            <person name="Lewis S.E."/>
            <person name="Richards S."/>
            <person name="Ashburner M."/>
            <person name="Henderson S.N."/>
            <person name="Sutton G.G."/>
            <person name="Wortman J.R."/>
            <person name="Yandell M.D."/>
            <person name="Zhang Q."/>
            <person name="Chen L.X."/>
            <person name="Brandon R.C."/>
            <person name="Rogers Y.-H.C."/>
            <person name="Blazej R.G."/>
            <person name="Champe M."/>
            <person name="Pfeiffer B.D."/>
            <person name="Wan K.H."/>
            <person name="Doyle C."/>
            <person name="Baxter E.G."/>
            <person name="Helt G."/>
            <person name="Nelson C.R."/>
            <person name="Miklos G.L.G."/>
            <person name="Abril J.F."/>
            <person name="Agbayani A."/>
            <person name="An H.-J."/>
            <person name="Andrews-Pfannkoch C."/>
            <person name="Baldwin D."/>
            <person name="Ballew R.M."/>
            <person name="Basu A."/>
            <person name="Baxendale J."/>
            <person name="Bayraktaroglu L."/>
            <person name="Beasley E.M."/>
            <person name="Beeson K.Y."/>
            <person name="Benos P.V."/>
            <person name="Berman B.P."/>
            <person name="Bhandari D."/>
            <person name="Bolshakov S."/>
            <person name="Borkova D."/>
            <person name="Botchan M.R."/>
            <person name="Bouck J."/>
            <person name="Brokstein P."/>
            <person name="Brottier P."/>
            <person name="Burtis K.C."/>
            <person name="Busam D.A."/>
            <person name="Butler H."/>
            <person name="Cadieu E."/>
            <person name="Center A."/>
            <person name="Chandra I."/>
            <person name="Cherry J.M."/>
            <person name="Cawley S."/>
            <person name="Dahlke C."/>
            <person name="Davenport L.B."/>
            <person name="Davies P."/>
            <person name="de Pablos B."/>
            <person name="Delcher A."/>
            <person name="Deng Z."/>
            <person name="Mays A.D."/>
            <person name="Dew I."/>
            <person name="Dietz S.M."/>
            <person name="Dodson K."/>
            <person name="Doup L.E."/>
            <person name="Downes M."/>
            <person name="Dugan-Rocha S."/>
            <person name="Dunkov B.C."/>
            <person name="Dunn P."/>
            <person name="Durbin K.J."/>
            <person name="Evangelista C.C."/>
            <person name="Ferraz C."/>
            <person name="Ferriera S."/>
            <person name="Fleischmann W."/>
            <person name="Fosler C."/>
            <person name="Gabrielian A.E."/>
            <person name="Garg N.S."/>
            <person name="Gelbart W.M."/>
            <person name="Glasser K."/>
            <person name="Glodek A."/>
            <person name="Gong F."/>
            <person name="Gorrell J.H."/>
            <person name="Gu Z."/>
            <person name="Guan P."/>
            <person name="Harris M."/>
            <person name="Harris N.L."/>
            <person name="Harvey D.A."/>
            <person name="Heiman T.J."/>
            <person name="Hernandez J.R."/>
            <person name="Houck J."/>
            <person name="Hostin D."/>
            <person name="Houston K.A."/>
            <person name="Howland T.J."/>
            <person name="Wei M.-H."/>
            <person name="Ibegwam C."/>
            <person name="Jalali M."/>
            <person name="Kalush F."/>
            <person name="Karpen G.H."/>
            <person name="Ke Z."/>
            <person name="Kennison J.A."/>
            <person name="Ketchum K.A."/>
            <person name="Kimmel B.E."/>
            <person name="Kodira C.D."/>
            <person name="Kraft C.L."/>
            <person name="Kravitz S."/>
            <person name="Kulp D."/>
            <person name="Lai Z."/>
            <person name="Lasko P."/>
            <person name="Lei Y."/>
            <person name="Levitsky A.A."/>
            <person name="Li J.H."/>
            <person name="Li Z."/>
            <person name="Liang Y."/>
            <person name="Lin X."/>
            <person name="Liu X."/>
            <person name="Mattei B."/>
            <person name="McIntosh T.C."/>
            <person name="McLeod M.P."/>
            <person name="McPherson D."/>
            <person name="Merkulov G."/>
            <person name="Milshina N.V."/>
            <person name="Mobarry C."/>
            <person name="Morris J."/>
            <person name="Moshrefi A."/>
            <person name="Mount S.M."/>
            <person name="Moy M."/>
            <person name="Murphy B."/>
            <person name="Murphy L."/>
            <person name="Muzny D.M."/>
            <person name="Nelson D.L."/>
            <person name="Nelson D.R."/>
            <person name="Nelson K.A."/>
            <person name="Nixon K."/>
            <person name="Nusskern D.R."/>
            <person name="Pacleb J.M."/>
            <person name="Palazzolo M."/>
            <person name="Pittman G.S."/>
            <person name="Pan S."/>
            <person name="Pollard J."/>
            <person name="Puri V."/>
            <person name="Reese M.G."/>
            <person name="Reinert K."/>
            <person name="Remington K."/>
            <person name="Saunders R.D.C."/>
            <person name="Scheeler F."/>
            <person name="Shen H."/>
            <person name="Shue B.C."/>
            <person name="Siden-Kiamos I."/>
            <person name="Simpson M."/>
            <person name="Skupski M.P."/>
            <person name="Smith T.J."/>
            <person name="Spier E."/>
            <person name="Spradling A.C."/>
            <person name="Stapleton M."/>
            <person name="Strong R."/>
            <person name="Sun E."/>
            <person name="Svirskas R."/>
            <person name="Tector C."/>
            <person name="Turner R."/>
            <person name="Venter E."/>
            <person name="Wang A.H."/>
            <person name="Wang X."/>
            <person name="Wang Z.-Y."/>
            <person name="Wassarman D.A."/>
            <person name="Weinstock G.M."/>
            <person name="Weissenbach J."/>
            <person name="Williams S.M."/>
            <person name="Woodage T."/>
            <person name="Worley K.C."/>
            <person name="Wu D."/>
            <person name="Yang S."/>
            <person name="Yao Q.A."/>
            <person name="Ye J."/>
            <person name="Yeh R.-F."/>
            <person name="Zaveri J.S."/>
            <person name="Zhan M."/>
            <person name="Zhang G."/>
            <person name="Zhao Q."/>
            <person name="Zheng L."/>
            <person name="Zheng X.H."/>
            <person name="Zhong F.N."/>
            <person name="Zhong W."/>
            <person name="Zhou X."/>
            <person name="Zhu S.C."/>
            <person name="Zhu X."/>
            <person name="Smith H.O."/>
            <person name="Gibbs R.A."/>
            <person name="Myers E.W."/>
            <person name="Rubin G.M."/>
            <person name="Venter J.C."/>
        </authorList>
    </citation>
    <scope>NUCLEOTIDE SEQUENCE [LARGE SCALE GENOMIC DNA]</scope>
    <source>
        <strain>Berkeley</strain>
    </source>
</reference>
<reference key="2">
    <citation type="journal article" date="2002" name="Genome Biol.">
        <title>Annotation of the Drosophila melanogaster euchromatic genome: a systematic review.</title>
        <authorList>
            <person name="Misra S."/>
            <person name="Crosby M.A."/>
            <person name="Mungall C.J."/>
            <person name="Matthews B.B."/>
            <person name="Campbell K.S."/>
            <person name="Hradecky P."/>
            <person name="Huang Y."/>
            <person name="Kaminker J.S."/>
            <person name="Millburn G.H."/>
            <person name="Prochnik S.E."/>
            <person name="Smith C.D."/>
            <person name="Tupy J.L."/>
            <person name="Whitfield E.J."/>
            <person name="Bayraktaroglu L."/>
            <person name="Berman B.P."/>
            <person name="Bettencourt B.R."/>
            <person name="Celniker S.E."/>
            <person name="de Grey A.D.N.J."/>
            <person name="Drysdale R.A."/>
            <person name="Harris N.L."/>
            <person name="Richter J."/>
            <person name="Russo S."/>
            <person name="Schroeder A.J."/>
            <person name="Shu S.Q."/>
            <person name="Stapleton M."/>
            <person name="Yamada C."/>
            <person name="Ashburner M."/>
            <person name="Gelbart W.M."/>
            <person name="Rubin G.M."/>
            <person name="Lewis S.E."/>
        </authorList>
    </citation>
    <scope>GENOME REANNOTATION</scope>
    <source>
        <strain>Berkeley</strain>
    </source>
</reference>
<reference key="3">
    <citation type="journal article" date="2002" name="Genome Biol.">
        <title>A Drosophila full-length cDNA resource.</title>
        <authorList>
            <person name="Stapleton M."/>
            <person name="Carlson J.W."/>
            <person name="Brokstein P."/>
            <person name="Yu C."/>
            <person name="Champe M."/>
            <person name="George R.A."/>
            <person name="Guarin H."/>
            <person name="Kronmiller B."/>
            <person name="Pacleb J.M."/>
            <person name="Park S."/>
            <person name="Wan K.H."/>
            <person name="Rubin G.M."/>
            <person name="Celniker S.E."/>
        </authorList>
    </citation>
    <scope>NUCLEOTIDE SEQUENCE [LARGE SCALE MRNA]</scope>
    <source>
        <strain>Berkeley</strain>
        <tissue>Embryo</tissue>
    </source>
</reference>
<reference key="4">
    <citation type="journal article" date="2008" name="J. Proteome Res.">
        <title>Phosphoproteome analysis of Drosophila melanogaster embryos.</title>
        <authorList>
            <person name="Zhai B."/>
            <person name="Villen J."/>
            <person name="Beausoleil S.A."/>
            <person name="Mintseris J."/>
            <person name="Gygi S.P."/>
        </authorList>
    </citation>
    <scope>PHOSPHORYLATION [LARGE SCALE ANALYSIS] AT SER-992</scope>
    <scope>IDENTIFICATION BY MASS SPECTROMETRY</scope>
    <source>
        <tissue>Embryo</tissue>
    </source>
</reference>
<reference key="5">
    <citation type="journal article" date="2010" name="Dev. Cell">
        <title>Kibra functions as a tumor suppressor protein that regulates Hippo signaling in conjunction with Merlin and Expanded.</title>
        <authorList>
            <person name="Yu J."/>
            <person name="Zheng Y."/>
            <person name="Dong J."/>
            <person name="Klusza S."/>
            <person name="Deng W.-M."/>
            <person name="Pan D."/>
        </authorList>
    </citation>
    <scope>FUNCTION</scope>
    <scope>SUBCELLULAR LOCATION</scope>
    <scope>DISRUPTION PHENOTYPE</scope>
    <scope>INTERACTION WITH HPO; SAV; MER AND EX</scope>
</reference>
<reference key="6">
    <citation type="journal article" date="2010" name="Dev. Cell">
        <title>Kibra Is a regulator of the Salvador/Warts/Hippo signaling network.</title>
        <authorList>
            <person name="Genevet A."/>
            <person name="Wehr M.C."/>
            <person name="Brain R."/>
            <person name="Thompson B.J."/>
            <person name="Tapon N."/>
        </authorList>
    </citation>
    <scope>FUNCTION</scope>
    <scope>DISRUPTION PHENOTYPE</scope>
    <scope>TISSUE SPECIFICITY</scope>
    <scope>INTERACTION WITH MER; EX AND WTS</scope>
</reference>
<reference key="7">
    <citation type="journal article" date="2010" name="Dev. Cell">
        <title>The WW domain protein Kibra acts upstream of Hippo in Drosophila.</title>
        <authorList>
            <person name="Baumgartner R."/>
            <person name="Poernbacher I."/>
            <person name="Buser N."/>
            <person name="Hafen E."/>
            <person name="Stocker H."/>
        </authorList>
    </citation>
    <scope>FUNCTION</scope>
    <scope>SUBCELLULAR LOCATION</scope>
    <scope>DISRUPTION PHENOTYPE</scope>
    <scope>INTERACTION WITH MER</scope>
</reference>
<name>KIBRA_DROME</name>
<gene>
    <name type="primary">kibra</name>
    <name type="ORF">CG33967</name>
</gene>
<comment type="function">
    <text evidence="6 7 8">Regulator of the Hippo/SWH (Sav/Wts/Hpo) signaling pathway, a signaling pathway that plays a pivotal role in organ size control and tumor suppression by restricting proliferation and promoting apoptosis. The core of this pathway is composed of a kinase cascade wherein Hippo (Hpo), in complex with its regulatory protein Salvador (Sav), phosphorylates and activates Warts (Wts) in complex with its regulatory protein Mats, which in turn phosphorylates and inactivates the Yorkie (Yki) oncoprotein. Kibra acts synergistically along with Ex and Mer to regulate the Hippo signaling pathway.</text>
</comment>
<comment type="subunit">
    <text evidence="6 7 8">Forms a complex with Mer and Ex. Interacts (via domain WW 1) with Ex (via RXPPXY motif). Interacts with Mer, Sav, Hpo and Wts.</text>
</comment>
<comment type="subcellular location">
    <subcellularLocation>
        <location>Cytoplasm</location>
    </subcellularLocation>
    <subcellularLocation>
        <location>Apical cell membrane</location>
    </subcellularLocation>
    <text>Localizes at the apical cortex of epithelial cells and cytoplasmic, punctate.</text>
</comment>
<comment type="tissue specificity">
    <text evidence="7">Expressed in ovarian posterior follicle cells and wing disks (at protein level).</text>
</comment>
<comment type="disruption phenotype">
    <text evidence="6 7 8">Homozygous embryonic lethality, oogenesis defects, tissue overgrowth characterized by excessive cell proliferation and diminished apoptosis.</text>
</comment>
<comment type="similarity">
    <text evidence="9">Belongs to the WWC family. KIBRA subfamily.</text>
</comment>
<protein>
    <recommendedName>
        <fullName>Protein kibra</fullName>
    </recommendedName>
</protein>
<evidence type="ECO:0000255" key="1"/>
<evidence type="ECO:0000255" key="2">
    <source>
        <dbReference type="PROSITE-ProRule" id="PRU00041"/>
    </source>
</evidence>
<evidence type="ECO:0000255" key="3">
    <source>
        <dbReference type="PROSITE-ProRule" id="PRU00224"/>
    </source>
</evidence>
<evidence type="ECO:0000256" key="4">
    <source>
        <dbReference type="SAM" id="MobiDB-lite"/>
    </source>
</evidence>
<evidence type="ECO:0000269" key="5">
    <source>
    </source>
</evidence>
<evidence type="ECO:0000269" key="6">
    <source>
    </source>
</evidence>
<evidence type="ECO:0000269" key="7">
    <source>
    </source>
</evidence>
<evidence type="ECO:0000269" key="8">
    <source>
    </source>
</evidence>
<evidence type="ECO:0000305" key="9"/>
<accession>Q9VFG8</accession>
<accession>Q5BIC8</accession>
<organism>
    <name type="scientific">Drosophila melanogaster</name>
    <name type="common">Fruit fly</name>
    <dbReference type="NCBI Taxonomy" id="7227"/>
    <lineage>
        <taxon>Eukaryota</taxon>
        <taxon>Metazoa</taxon>
        <taxon>Ecdysozoa</taxon>
        <taxon>Arthropoda</taxon>
        <taxon>Hexapoda</taxon>
        <taxon>Insecta</taxon>
        <taxon>Pterygota</taxon>
        <taxon>Neoptera</taxon>
        <taxon>Endopterygota</taxon>
        <taxon>Diptera</taxon>
        <taxon>Brachycera</taxon>
        <taxon>Muscomorpha</taxon>
        <taxon>Ephydroidea</taxon>
        <taxon>Drosophilidae</taxon>
        <taxon>Drosophila</taxon>
        <taxon>Sophophora</taxon>
    </lineage>
</organism>
<keyword id="KW-1003">Cell membrane</keyword>
<keyword id="KW-0175">Coiled coil</keyword>
<keyword id="KW-0963">Cytoplasm</keyword>
<keyword id="KW-0472">Membrane</keyword>
<keyword id="KW-0597">Phosphoprotein</keyword>
<keyword id="KW-1185">Reference proteome</keyword>
<keyword id="KW-0677">Repeat</keyword>
<keyword id="KW-0804">Transcription</keyword>
<keyword id="KW-0805">Transcription regulation</keyword>